<gene>
    <name type="primary">ctrA</name>
    <name type="ordered locus">NMB0071</name>
</gene>
<accession>P0A0V8</accession>
<accession>P32013</accession>
<organism>
    <name type="scientific">Neisseria meningitidis serogroup B (strain ATCC BAA-335 / MC58)</name>
    <dbReference type="NCBI Taxonomy" id="122586"/>
    <lineage>
        <taxon>Bacteria</taxon>
        <taxon>Pseudomonadati</taxon>
        <taxon>Pseudomonadota</taxon>
        <taxon>Betaproteobacteria</taxon>
        <taxon>Neisseriales</taxon>
        <taxon>Neisseriaceae</taxon>
        <taxon>Neisseria</taxon>
    </lineage>
</organism>
<feature type="signal peptide" evidence="2">
    <location>
        <begin position="1"/>
        <end position="22"/>
    </location>
</feature>
<feature type="chain" id="PRO_0000025218" description="Capsule polysaccharide export outer membrane protein CtrA">
    <location>
        <begin position="23"/>
        <end position="391"/>
    </location>
</feature>
<feature type="topological domain" description="Periplasmic" evidence="1">
    <location>
        <begin position="23"/>
        <end position="33"/>
    </location>
</feature>
<feature type="transmembrane region" description="Beta stranded" evidence="1">
    <location>
        <begin position="34"/>
        <end position="43"/>
    </location>
</feature>
<feature type="topological domain" description="Extracellular" evidence="1">
    <location>
        <begin position="44"/>
        <end position="57"/>
    </location>
</feature>
<feature type="transmembrane region" description="Beta stranded" evidence="1">
    <location>
        <begin position="58"/>
        <end position="67"/>
    </location>
</feature>
<feature type="topological domain" description="Periplasmic" evidence="1">
    <location>
        <begin position="68"/>
        <end position="83"/>
    </location>
</feature>
<feature type="transmembrane region" description="Beta stranded" evidence="1">
    <location>
        <begin position="84"/>
        <end position="93"/>
    </location>
</feature>
<feature type="topological domain" description="Extracellular" evidence="1">
    <location>
        <begin position="94"/>
        <end position="117"/>
    </location>
</feature>
<feature type="transmembrane region" description="Beta stranded" evidence="1">
    <location>
        <begin position="118"/>
        <end position="127"/>
    </location>
</feature>
<feature type="topological domain" description="Periplasmic" evidence="1">
    <location>
        <begin position="128"/>
        <end position="135"/>
    </location>
</feature>
<feature type="transmembrane region" description="Beta stranded" evidence="1">
    <location>
        <begin position="136"/>
        <end position="145"/>
    </location>
</feature>
<feature type="topological domain" description="Extracellular" evidence="1">
    <location>
        <begin position="146"/>
        <end position="148"/>
    </location>
</feature>
<feature type="transmembrane region" description="Beta stranded" evidence="1">
    <location>
        <begin position="149"/>
        <end position="158"/>
    </location>
</feature>
<feature type="topological domain" description="Periplasmic" evidence="1">
    <location>
        <begin position="159"/>
        <end position="161"/>
    </location>
</feature>
<feature type="transmembrane region" description="Beta stranded" evidence="1">
    <location>
        <begin position="162"/>
        <end position="171"/>
    </location>
</feature>
<feature type="topological domain" description="Extracellular" evidence="1">
    <location>
        <begin position="172"/>
        <end position="178"/>
    </location>
</feature>
<feature type="transmembrane region" description="Beta stranded" evidence="1">
    <location>
        <begin position="179"/>
        <end position="188"/>
    </location>
</feature>
<feature type="topological domain" description="Periplasmic" evidence="1">
    <location>
        <begin position="189"/>
        <end position="391"/>
    </location>
</feature>
<feature type="lipid moiety-binding region" description="N-palmitoyl cysteine" evidence="2">
    <location>
        <position position="23"/>
    </location>
</feature>
<feature type="lipid moiety-binding region" description="S-diacylglycerol cysteine" evidence="2">
    <location>
        <position position="23"/>
    </location>
</feature>
<evidence type="ECO:0000255" key="1"/>
<evidence type="ECO:0000255" key="2">
    <source>
        <dbReference type="PROSITE-ProRule" id="PRU00303"/>
    </source>
</evidence>
<evidence type="ECO:0000305" key="3"/>
<keyword id="KW-0972">Capsule biogenesis/degradation</keyword>
<keyword id="KW-0998">Cell outer membrane</keyword>
<keyword id="KW-0406">Ion transport</keyword>
<keyword id="KW-0449">Lipoprotein</keyword>
<keyword id="KW-0472">Membrane</keyword>
<keyword id="KW-0564">Palmitate</keyword>
<keyword id="KW-0625">Polysaccharide transport</keyword>
<keyword id="KW-0626">Porin</keyword>
<keyword id="KW-1185">Reference proteome</keyword>
<keyword id="KW-0732">Signal</keyword>
<keyword id="KW-0762">Sugar transport</keyword>
<keyword id="KW-0812">Transmembrane</keyword>
<keyword id="KW-1134">Transmembrane beta strand</keyword>
<keyword id="KW-0813">Transport</keyword>
<reference key="1">
    <citation type="journal article" date="1991" name="Mol. Microbiol.">
        <title>Evidence for a common molecular origin of the capsule gene loci in Gram-negative bacteria expressing group II capsular polysaccharides.</title>
        <authorList>
            <person name="Frosch M."/>
            <person name="Edwards U."/>
            <person name="Bousset K."/>
            <person name="Krausse B."/>
            <person name="Weisgerber C."/>
        </authorList>
    </citation>
    <scope>NUCLEOTIDE SEQUENCE [GENOMIC DNA]</scope>
    <source>
        <strain>B1940 / Serogroup B</strain>
    </source>
</reference>
<reference key="2">
    <citation type="journal article" date="1992" name="Infect. Immun.">
        <title>Conserved outer membrane protein of Neisseria meningitidis involved in capsule expression.</title>
        <authorList>
            <person name="Frosch M."/>
            <person name="Mueller D."/>
            <person name="Bousset K."/>
            <person name="Mueller A."/>
        </authorList>
    </citation>
    <scope>NUCLEOTIDE SEQUENCE [GENOMIC DNA]</scope>
    <source>
        <strain>B1936 / Serogroup B</strain>
    </source>
</reference>
<reference key="3">
    <citation type="journal article" date="2000" name="Science">
        <title>Complete genome sequence of Neisseria meningitidis serogroup B strain MC58.</title>
        <authorList>
            <person name="Tettelin H."/>
            <person name="Saunders N.J."/>
            <person name="Heidelberg J.F."/>
            <person name="Jeffries A.C."/>
            <person name="Nelson K.E."/>
            <person name="Eisen J.A."/>
            <person name="Ketchum K.A."/>
            <person name="Hood D.W."/>
            <person name="Peden J.F."/>
            <person name="Dodson R.J."/>
            <person name="Nelson W.C."/>
            <person name="Gwinn M.L."/>
            <person name="DeBoy R.T."/>
            <person name="Peterson J.D."/>
            <person name="Hickey E.K."/>
            <person name="Haft D.H."/>
            <person name="Salzberg S.L."/>
            <person name="White O."/>
            <person name="Fleischmann R.D."/>
            <person name="Dougherty B.A."/>
            <person name="Mason T.M."/>
            <person name="Ciecko A."/>
            <person name="Parksey D.S."/>
            <person name="Blair E."/>
            <person name="Cittone H."/>
            <person name="Clark E.B."/>
            <person name="Cotton M.D."/>
            <person name="Utterback T.R."/>
            <person name="Khouri H.M."/>
            <person name="Qin H."/>
            <person name="Vamathevan J.J."/>
            <person name="Gill J."/>
            <person name="Scarlato V."/>
            <person name="Masignani V."/>
            <person name="Pizza M."/>
            <person name="Grandi G."/>
            <person name="Sun L."/>
            <person name="Smith H.O."/>
            <person name="Fraser C.M."/>
            <person name="Moxon E.R."/>
            <person name="Rappuoli R."/>
            <person name="Venter J.C."/>
        </authorList>
    </citation>
    <scope>NUCLEOTIDE SEQUENCE [LARGE SCALE GENOMIC DNA]</scope>
    <source>
        <strain>ATCC BAA-335 / MC58</strain>
    </source>
</reference>
<sequence length="391" mass="41949">MFKVKFYIRHAVLLLCGSLIVGCSAIPSSGPSAKKIVSLGQQSEVQIPEVELIDVNHTVAQLLYKAQINQSFTQFGDGYASAGTLNIGDVLDIMIWEAPPAVLFGGGLSSMGSGSAHQTKLPEQLVTARGTVSVPFVGDISVVGKTPGQVQEIIKGRLKKMANQPQVMVRLVQNNAANVSVIRAGNSVRMPLTAAGERVLDAVAAVGGSTANVQDTNVQLTRGNVVRTVALEDLVANPRQNILLRRGDVVTMITNPYTFTSMGAVGRTQEIGFSARGLSLSEAIGRMGGLQDRRSDARGVFVFRYTPLVELPAERQDKWIAQGYGSEAEIPTVYRVNMADAHSLFSMQRFPVKNKDVLYVSNAPLAEVQKFLSFVFSPVTSGANSINNLTN</sequence>
<dbReference type="EMBL" id="AE002098">
    <property type="protein sequence ID" value="AAF40538.1"/>
    <property type="molecule type" value="Genomic_DNA"/>
</dbReference>
<dbReference type="PIR" id="S15220">
    <property type="entry name" value="S15220"/>
</dbReference>
<dbReference type="RefSeq" id="NP_273135.1">
    <property type="nucleotide sequence ID" value="NC_003112.2"/>
</dbReference>
<dbReference type="RefSeq" id="WP_002215290.1">
    <property type="nucleotide sequence ID" value="NC_003112.2"/>
</dbReference>
<dbReference type="SMR" id="P0A0V8"/>
<dbReference type="FunCoup" id="P0A0V8">
    <property type="interactions" value="35"/>
</dbReference>
<dbReference type="STRING" id="122586.NMB0071"/>
<dbReference type="PaxDb" id="122586-NMB0071"/>
<dbReference type="KEGG" id="nme:NMB0071"/>
<dbReference type="PATRIC" id="fig|122586.8.peg.105"/>
<dbReference type="HOGENOM" id="CLU_038343_4_0_4"/>
<dbReference type="InParanoid" id="P0A0V8"/>
<dbReference type="OrthoDB" id="9808421at2"/>
<dbReference type="Proteomes" id="UP000000425">
    <property type="component" value="Chromosome"/>
</dbReference>
<dbReference type="GO" id="GO:0009279">
    <property type="term" value="C:cell outer membrane"/>
    <property type="evidence" value="ECO:0007669"/>
    <property type="project" value="UniProtKB-SubCell"/>
</dbReference>
<dbReference type="GO" id="GO:0046930">
    <property type="term" value="C:pore complex"/>
    <property type="evidence" value="ECO:0007669"/>
    <property type="project" value="UniProtKB-KW"/>
</dbReference>
<dbReference type="GO" id="GO:0015159">
    <property type="term" value="F:polysaccharide transmembrane transporter activity"/>
    <property type="evidence" value="ECO:0000318"/>
    <property type="project" value="GO_Central"/>
</dbReference>
<dbReference type="GO" id="GO:0015288">
    <property type="term" value="F:porin activity"/>
    <property type="evidence" value="ECO:0007669"/>
    <property type="project" value="UniProtKB-KW"/>
</dbReference>
<dbReference type="GO" id="GO:0006811">
    <property type="term" value="P:monoatomic ion transport"/>
    <property type="evidence" value="ECO:0007669"/>
    <property type="project" value="UniProtKB-KW"/>
</dbReference>
<dbReference type="Gene3D" id="3.10.560.10">
    <property type="entry name" value="Outer membrane lipoprotein wza domain like"/>
    <property type="match status" value="2"/>
</dbReference>
<dbReference type="Gene3D" id="3.30.1950.10">
    <property type="entry name" value="wza like domain"/>
    <property type="match status" value="1"/>
</dbReference>
<dbReference type="InterPro" id="IPR049712">
    <property type="entry name" value="Poly_export"/>
</dbReference>
<dbReference type="InterPro" id="IPR003715">
    <property type="entry name" value="Poly_export_N"/>
</dbReference>
<dbReference type="InterPro" id="IPR054765">
    <property type="entry name" value="SLBB_dom"/>
</dbReference>
<dbReference type="PANTHER" id="PTHR33619">
    <property type="entry name" value="POLYSACCHARIDE EXPORT PROTEIN GFCE-RELATED"/>
    <property type="match status" value="1"/>
</dbReference>
<dbReference type="PANTHER" id="PTHR33619:SF3">
    <property type="entry name" value="POLYSACCHARIDE EXPORT PROTEIN GFCE-RELATED"/>
    <property type="match status" value="1"/>
</dbReference>
<dbReference type="Pfam" id="PF02563">
    <property type="entry name" value="Poly_export"/>
    <property type="match status" value="1"/>
</dbReference>
<dbReference type="Pfam" id="PF22461">
    <property type="entry name" value="SLBB_2"/>
    <property type="match status" value="1"/>
</dbReference>
<dbReference type="PROSITE" id="PS51257">
    <property type="entry name" value="PROKAR_LIPOPROTEIN"/>
    <property type="match status" value="1"/>
</dbReference>
<protein>
    <recommendedName>
        <fullName>Capsule polysaccharide export outer membrane protein CtrA</fullName>
    </recommendedName>
</protein>
<comment type="function">
    <text>Involved in transport of capsular polysaccharides to the cell surface. May function as a membrane anchor for capsular polysaccharides. Possible porin properties.</text>
</comment>
<comment type="subcellular location">
    <subcellularLocation>
        <location>Cell outer membrane</location>
        <topology>Multi-pass membrane protein</topology>
    </subcellularLocation>
</comment>
<comment type="similarity">
    <text evidence="3">Belongs to the BexD/CtrA/VexA family.</text>
</comment>
<proteinExistence type="inferred from homology"/>
<name>CTRA_NEIMB</name>